<feature type="chain" id="PRO_0000415986" description="Mini-ribonuclease 3">
    <location>
        <begin position="1"/>
        <end position="145"/>
    </location>
</feature>
<feature type="active site" evidence="1">
    <location>
        <position position="27"/>
    </location>
</feature>
<organism>
    <name type="scientific">Kosmotoga olearia (strain ATCC BAA-1733 / DSM 21960 / TBF 19.5.1)</name>
    <dbReference type="NCBI Taxonomy" id="521045"/>
    <lineage>
        <taxon>Bacteria</taxon>
        <taxon>Thermotogati</taxon>
        <taxon>Thermotogota</taxon>
        <taxon>Thermotogae</taxon>
        <taxon>Kosmotogales</taxon>
        <taxon>Kosmotogaceae</taxon>
        <taxon>Kosmotoga</taxon>
    </lineage>
</organism>
<sequence length="145" mass="17004">MSDFENFFRTDIVPEELSIDSLSFVGDAVYSLYFRIKTLRSAKRRTGYQHNLTLLYVEAKGQRKALEVIEKFLSEEERIIVRRGYNSRGARKRGDDENYKCATALEALVGYLFLKGRYRRLEELLEKVENDVSSWKKCAERDSKT</sequence>
<protein>
    <recommendedName>
        <fullName evidence="1">Mini-ribonuclease 3</fullName>
        <shortName evidence="1">Mini-3</shortName>
        <shortName evidence="1">Mini-RNase 3</shortName>
        <ecNumber evidence="1">3.1.26.-</ecNumber>
    </recommendedName>
    <alternativeName>
        <fullName evidence="1">Mini-RNase III</fullName>
        <shortName evidence="1">Mini-III</shortName>
    </alternativeName>
</protein>
<reference key="1">
    <citation type="submission" date="2009-06" db="EMBL/GenBank/DDBJ databases">
        <title>Complete sequence of Thermotogales bacterium TBF 19.5.1.</title>
        <authorList>
            <consortium name="US DOE Joint Genome Institute"/>
            <person name="Lucas S."/>
            <person name="Copeland A."/>
            <person name="Lapidus A."/>
            <person name="Glavina del Rio T."/>
            <person name="Tice H."/>
            <person name="Bruce D."/>
            <person name="Goodwin L."/>
            <person name="Pitluck S."/>
            <person name="Chertkov O."/>
            <person name="Brettin T."/>
            <person name="Detter J.C."/>
            <person name="Han C."/>
            <person name="Schmutz J."/>
            <person name="Larimer F."/>
            <person name="Land M."/>
            <person name="Hauser L."/>
            <person name="Kyrpides N."/>
            <person name="Ovchinnikova G."/>
            <person name="Noll K."/>
        </authorList>
    </citation>
    <scope>NUCLEOTIDE SEQUENCE [LARGE SCALE GENOMIC DNA]</scope>
    <source>
        <strain>ATCC BAA-1733 / DSM 21960 / TBF 19.5.1</strain>
    </source>
</reference>
<gene>
    <name evidence="1" type="primary">mrnC</name>
    <name type="ordered locus">Kole_1605</name>
</gene>
<evidence type="ECO:0000255" key="1">
    <source>
        <dbReference type="HAMAP-Rule" id="MF_01468"/>
    </source>
</evidence>
<accession>C5CF30</accession>
<dbReference type="EC" id="3.1.26.-" evidence="1"/>
<dbReference type="EMBL" id="CP001634">
    <property type="protein sequence ID" value="ACR80295.1"/>
    <property type="molecule type" value="Genomic_DNA"/>
</dbReference>
<dbReference type="SMR" id="C5CF30"/>
<dbReference type="STRING" id="521045.Kole_1605"/>
<dbReference type="KEGG" id="kol:Kole_1605"/>
<dbReference type="eggNOG" id="COG1939">
    <property type="taxonomic scope" value="Bacteria"/>
</dbReference>
<dbReference type="HOGENOM" id="CLU_091169_2_1_0"/>
<dbReference type="OrthoDB" id="46571at2"/>
<dbReference type="Proteomes" id="UP000002382">
    <property type="component" value="Chromosome"/>
</dbReference>
<dbReference type="GO" id="GO:0005737">
    <property type="term" value="C:cytoplasm"/>
    <property type="evidence" value="ECO:0007669"/>
    <property type="project" value="UniProtKB-SubCell"/>
</dbReference>
<dbReference type="GO" id="GO:0004525">
    <property type="term" value="F:ribonuclease III activity"/>
    <property type="evidence" value="ECO:0007669"/>
    <property type="project" value="InterPro"/>
</dbReference>
<dbReference type="GO" id="GO:0019843">
    <property type="term" value="F:rRNA binding"/>
    <property type="evidence" value="ECO:0007669"/>
    <property type="project" value="UniProtKB-UniRule"/>
</dbReference>
<dbReference type="GO" id="GO:0006364">
    <property type="term" value="P:rRNA processing"/>
    <property type="evidence" value="ECO:0007669"/>
    <property type="project" value="UniProtKB-UniRule"/>
</dbReference>
<dbReference type="Gene3D" id="1.10.1520.10">
    <property type="entry name" value="Ribonuclease III domain"/>
    <property type="match status" value="1"/>
</dbReference>
<dbReference type="HAMAP" id="MF_01468">
    <property type="entry name" value="RNase_Mini_III"/>
    <property type="match status" value="1"/>
</dbReference>
<dbReference type="InterPro" id="IPR008226">
    <property type="entry name" value="Mini3_fam"/>
</dbReference>
<dbReference type="InterPro" id="IPR000999">
    <property type="entry name" value="RNase_III_dom"/>
</dbReference>
<dbReference type="InterPro" id="IPR036389">
    <property type="entry name" value="RNase_III_sf"/>
</dbReference>
<dbReference type="PANTHER" id="PTHR34276">
    <property type="entry name" value="MINI-RIBONUCLEASE 3"/>
    <property type="match status" value="1"/>
</dbReference>
<dbReference type="PANTHER" id="PTHR34276:SF1">
    <property type="entry name" value="MINI-RIBONUCLEASE 3"/>
    <property type="match status" value="1"/>
</dbReference>
<dbReference type="Pfam" id="PF00636">
    <property type="entry name" value="Ribonuclease_3"/>
    <property type="match status" value="1"/>
</dbReference>
<dbReference type="PIRSF" id="PIRSF005520">
    <property type="entry name" value="UCP005520"/>
    <property type="match status" value="1"/>
</dbReference>
<dbReference type="SUPFAM" id="SSF69065">
    <property type="entry name" value="RNase III domain-like"/>
    <property type="match status" value="1"/>
</dbReference>
<keyword id="KW-0963">Cytoplasm</keyword>
<keyword id="KW-0255">Endonuclease</keyword>
<keyword id="KW-0378">Hydrolase</keyword>
<keyword id="KW-0460">Magnesium</keyword>
<keyword id="KW-0540">Nuclease</keyword>
<keyword id="KW-1185">Reference proteome</keyword>
<keyword id="KW-0690">Ribosome biogenesis</keyword>
<keyword id="KW-0694">RNA-binding</keyword>
<keyword id="KW-0698">rRNA processing</keyword>
<keyword id="KW-0699">rRNA-binding</keyword>
<name>MRNC_KOSOT</name>
<comment type="function">
    <text evidence="1">Involved in correct processing of both the 5' and 3' ends of 23S rRNA precursor. Processes 30S rRNA precursor transcript even in absence of ribonuclease 3 (Rnc); Rnc processes 30S rRNA into smaller rRNA precursors.</text>
</comment>
<comment type="cofactor">
    <cofactor evidence="1">
        <name>Mg(2+)</name>
        <dbReference type="ChEBI" id="CHEBI:18420"/>
    </cofactor>
</comment>
<comment type="subunit">
    <text evidence="1">Homodimer.</text>
</comment>
<comment type="subcellular location">
    <subcellularLocation>
        <location evidence="1">Cytoplasm</location>
    </subcellularLocation>
</comment>
<comment type="similarity">
    <text evidence="1">Belongs to the MrnC RNase family.</text>
</comment>
<proteinExistence type="inferred from homology"/>